<gene>
    <name evidence="1" type="primary">minE</name>
    <name type="ordered locus">ETA_15350</name>
</gene>
<keyword id="KW-0131">Cell cycle</keyword>
<keyword id="KW-0132">Cell division</keyword>
<keyword id="KW-1185">Reference proteome</keyword>
<organism>
    <name type="scientific">Erwinia tasmaniensis (strain DSM 17950 / CFBP 7177 / CIP 109463 / NCPPB 4357 / Et1/99)</name>
    <dbReference type="NCBI Taxonomy" id="465817"/>
    <lineage>
        <taxon>Bacteria</taxon>
        <taxon>Pseudomonadati</taxon>
        <taxon>Pseudomonadota</taxon>
        <taxon>Gammaproteobacteria</taxon>
        <taxon>Enterobacterales</taxon>
        <taxon>Erwiniaceae</taxon>
        <taxon>Erwinia</taxon>
    </lineage>
</organism>
<sequence length="91" mass="10593">MALLDFFLSRKKSTANIAKERLQIIVAERRRGDCEPHYLPQLKRDILEVICKYVKIDPEMLSVKLDQKDDDISILELNVTLPESEAEEVHK</sequence>
<evidence type="ECO:0000255" key="1">
    <source>
        <dbReference type="HAMAP-Rule" id="MF_00262"/>
    </source>
</evidence>
<proteinExistence type="inferred from homology"/>
<name>MINE_ERWT9</name>
<comment type="function">
    <text evidence="1">Prevents the cell division inhibition by proteins MinC and MinD at internal division sites while permitting inhibition at polar sites. This ensures cell division at the proper site by restricting the formation of a division septum at the midpoint of the long axis of the cell.</text>
</comment>
<comment type="similarity">
    <text evidence="1">Belongs to the MinE family.</text>
</comment>
<reference key="1">
    <citation type="journal article" date="2008" name="Environ. Microbiol.">
        <title>The genome of Erwinia tasmaniensis strain Et1/99, a non-pathogenic bacterium in the genus Erwinia.</title>
        <authorList>
            <person name="Kube M."/>
            <person name="Migdoll A.M."/>
            <person name="Mueller I."/>
            <person name="Kuhl H."/>
            <person name="Beck A."/>
            <person name="Reinhardt R."/>
            <person name="Geider K."/>
        </authorList>
    </citation>
    <scope>NUCLEOTIDE SEQUENCE [LARGE SCALE GENOMIC DNA]</scope>
    <source>
        <strain>DSM 17950 / CFBP 7177 / CIP 109463 / NCPPB 4357 / Et1/99</strain>
    </source>
</reference>
<protein>
    <recommendedName>
        <fullName evidence="1">Cell division topological specificity factor</fullName>
    </recommendedName>
</protein>
<feature type="chain" id="PRO_1000114221" description="Cell division topological specificity factor">
    <location>
        <begin position="1"/>
        <end position="91"/>
    </location>
</feature>
<dbReference type="EMBL" id="CU468135">
    <property type="protein sequence ID" value="CAO96581.1"/>
    <property type="molecule type" value="Genomic_DNA"/>
</dbReference>
<dbReference type="RefSeq" id="WP_012441274.1">
    <property type="nucleotide sequence ID" value="NC_010694.1"/>
</dbReference>
<dbReference type="SMR" id="B2VJ42"/>
<dbReference type="STRING" id="465817.ETA_15350"/>
<dbReference type="KEGG" id="eta:ETA_15350"/>
<dbReference type="eggNOG" id="COG0851">
    <property type="taxonomic scope" value="Bacteria"/>
</dbReference>
<dbReference type="HOGENOM" id="CLU_137929_2_2_6"/>
<dbReference type="OrthoDB" id="9802655at2"/>
<dbReference type="Proteomes" id="UP000001726">
    <property type="component" value="Chromosome"/>
</dbReference>
<dbReference type="GO" id="GO:0051301">
    <property type="term" value="P:cell division"/>
    <property type="evidence" value="ECO:0007669"/>
    <property type="project" value="UniProtKB-KW"/>
</dbReference>
<dbReference type="GO" id="GO:0032955">
    <property type="term" value="P:regulation of division septum assembly"/>
    <property type="evidence" value="ECO:0007669"/>
    <property type="project" value="InterPro"/>
</dbReference>
<dbReference type="FunFam" id="3.30.1070.10:FF:000001">
    <property type="entry name" value="Cell division topological specificity factor"/>
    <property type="match status" value="1"/>
</dbReference>
<dbReference type="Gene3D" id="3.30.1070.10">
    <property type="entry name" value="Cell division topological specificity factor MinE"/>
    <property type="match status" value="1"/>
</dbReference>
<dbReference type="HAMAP" id="MF_00262">
    <property type="entry name" value="MinE"/>
    <property type="match status" value="1"/>
</dbReference>
<dbReference type="InterPro" id="IPR005527">
    <property type="entry name" value="MinE"/>
</dbReference>
<dbReference type="InterPro" id="IPR036707">
    <property type="entry name" value="MinE_sf"/>
</dbReference>
<dbReference type="NCBIfam" id="TIGR01215">
    <property type="entry name" value="minE"/>
    <property type="match status" value="1"/>
</dbReference>
<dbReference type="NCBIfam" id="NF001422">
    <property type="entry name" value="PRK00296.1"/>
    <property type="match status" value="1"/>
</dbReference>
<dbReference type="Pfam" id="PF03776">
    <property type="entry name" value="MinE"/>
    <property type="match status" value="1"/>
</dbReference>
<dbReference type="SUPFAM" id="SSF55229">
    <property type="entry name" value="Cell division protein MinE topological specificity domain"/>
    <property type="match status" value="1"/>
</dbReference>
<accession>B2VJ42</accession>